<organism>
    <name type="scientific">Homo sapiens</name>
    <name type="common">Human</name>
    <dbReference type="NCBI Taxonomy" id="9606"/>
    <lineage>
        <taxon>Eukaryota</taxon>
        <taxon>Metazoa</taxon>
        <taxon>Chordata</taxon>
        <taxon>Craniata</taxon>
        <taxon>Vertebrata</taxon>
        <taxon>Euteleostomi</taxon>
        <taxon>Mammalia</taxon>
        <taxon>Eutheria</taxon>
        <taxon>Euarchontoglires</taxon>
        <taxon>Primates</taxon>
        <taxon>Haplorrhini</taxon>
        <taxon>Catarrhini</taxon>
        <taxon>Hominidae</taxon>
        <taxon>Homo</taxon>
    </lineage>
</organism>
<dbReference type="EMBL" id="AK058089">
    <property type="protein sequence ID" value="BAB71659.1"/>
    <property type="molecule type" value="mRNA"/>
</dbReference>
<dbReference type="EMBL" id="AK310337">
    <property type="status" value="NOT_ANNOTATED_CDS"/>
    <property type="molecule type" value="mRNA"/>
</dbReference>
<dbReference type="EMBL" id="AL121586">
    <property type="protein sequence ID" value="CAO03347.1"/>
    <property type="molecule type" value="Genomic_DNA"/>
</dbReference>
<dbReference type="EMBL" id="CH471077">
    <property type="protein sequence ID" value="EAW76202.1"/>
    <property type="molecule type" value="Genomic_DNA"/>
</dbReference>
<dbReference type="EMBL" id="BC112060">
    <property type="protein sequence ID" value="AAI12061.1"/>
    <property type="molecule type" value="mRNA"/>
</dbReference>
<dbReference type="EMBL" id="BC112062">
    <property type="protein sequence ID" value="AAI12063.1"/>
    <property type="molecule type" value="mRNA"/>
</dbReference>
<dbReference type="CCDS" id="CCDS46594.1">
    <molecule id="Q96LM9-2"/>
</dbReference>
<dbReference type="RefSeq" id="NP_001138822.1">
    <molecule id="Q96LM9-2"/>
    <property type="nucleotide sequence ID" value="NM_001145350.2"/>
</dbReference>
<dbReference type="RefSeq" id="XP_047295860.1">
    <molecule id="Q96LM9-2"/>
    <property type="nucleotide sequence ID" value="XM_047439904.1"/>
</dbReference>
<dbReference type="RefSeq" id="XP_047295861.1">
    <molecule id="Q96LM9-2"/>
    <property type="nucleotide sequence ID" value="XM_047439905.1"/>
</dbReference>
<dbReference type="RefSeq" id="XP_047295862.1">
    <molecule id="Q96LM9-2"/>
    <property type="nucleotide sequence ID" value="XM_047439906.1"/>
</dbReference>
<dbReference type="RefSeq" id="XP_047295863.1">
    <molecule id="Q96LM9-2"/>
    <property type="nucleotide sequence ID" value="XM_047439907.1"/>
</dbReference>
<dbReference type="RefSeq" id="XP_047295864.1">
    <molecule id="Q96LM9-2"/>
    <property type="nucleotide sequence ID" value="XM_047439908.1"/>
</dbReference>
<dbReference type="RefSeq" id="XP_047295865.1">
    <molecule id="Q96LM9-2"/>
    <property type="nucleotide sequence ID" value="XM_047439909.1"/>
</dbReference>
<dbReference type="RefSeq" id="XP_054179003.1">
    <molecule id="Q96LM9-2"/>
    <property type="nucleotide sequence ID" value="XM_054323028.1"/>
</dbReference>
<dbReference type="RefSeq" id="XP_054179004.1">
    <molecule id="Q96LM9-2"/>
    <property type="nucleotide sequence ID" value="XM_054323029.1"/>
</dbReference>
<dbReference type="RefSeq" id="XP_054179005.1">
    <molecule id="Q96LM9-2"/>
    <property type="nucleotide sequence ID" value="XM_054323030.1"/>
</dbReference>
<dbReference type="RefSeq" id="XP_054179006.1">
    <molecule id="Q96LM9-2"/>
    <property type="nucleotide sequence ID" value="XM_054323031.1"/>
</dbReference>
<dbReference type="RefSeq" id="XP_054179007.1">
    <molecule id="Q96LM9-2"/>
    <property type="nucleotide sequence ID" value="XM_054323032.1"/>
</dbReference>
<dbReference type="RefSeq" id="XP_054179008.1">
    <molecule id="Q96LM9-2"/>
    <property type="nucleotide sequence ID" value="XM_054323033.1"/>
</dbReference>
<dbReference type="BioGRID" id="126744">
    <property type="interactions" value="2"/>
</dbReference>
<dbReference type="FunCoup" id="Q96LM9">
    <property type="interactions" value="1"/>
</dbReference>
<dbReference type="IntAct" id="Q96LM9">
    <property type="interactions" value="1"/>
</dbReference>
<dbReference type="STRING" id="9606.ENSP00000403566"/>
<dbReference type="BioMuta" id="C20orf173"/>
<dbReference type="MassIVE" id="Q96LM9"/>
<dbReference type="PaxDb" id="9606-ENSP00000403566"/>
<dbReference type="PeptideAtlas" id="Q96LM9"/>
<dbReference type="TopDownProteomics" id="Q96LM9-1">
    <molecule id="Q96LM9-1"/>
</dbReference>
<dbReference type="Antibodypedia" id="54916">
    <property type="antibodies" value="81 antibodies from 14 providers"/>
</dbReference>
<dbReference type="DNASU" id="140873"/>
<dbReference type="Ensembl" id="ENST00000246199.5">
    <molecule id="Q96LM9-1"/>
    <property type="protein sequence ID" value="ENSP00000246199.2"/>
    <property type="gene ID" value="ENSG00000125975.14"/>
</dbReference>
<dbReference type="Ensembl" id="ENST00000374345.8">
    <molecule id="Q96LM9-2"/>
    <property type="protein sequence ID" value="ENSP00000363465.4"/>
    <property type="gene ID" value="ENSG00000125975.14"/>
</dbReference>
<dbReference type="Ensembl" id="ENST00000444723.3">
    <molecule id="Q96LM9-2"/>
    <property type="protein sequence ID" value="ENSP00000403566.1"/>
    <property type="gene ID" value="ENSG00000125975.14"/>
</dbReference>
<dbReference type="GeneID" id="140873"/>
<dbReference type="KEGG" id="hsa:140873"/>
<dbReference type="MANE-Select" id="ENST00000444723.3">
    <molecule id="Q96LM9-2"/>
    <property type="protein sequence ID" value="ENSP00000403566.1"/>
    <property type="RefSeq nucleotide sequence ID" value="NM_001145350.2"/>
    <property type="RefSeq protein sequence ID" value="NP_001138822.1"/>
</dbReference>
<dbReference type="UCSC" id="uc002xcp.3">
    <molecule id="Q96LM9-1"/>
    <property type="organism name" value="human"/>
</dbReference>
<dbReference type="AGR" id="HGNC:16166"/>
<dbReference type="CTD" id="140873"/>
<dbReference type="GeneCards" id="C20orf173"/>
<dbReference type="HGNC" id="HGNC:16166">
    <property type="gene designation" value="C20orf173"/>
</dbReference>
<dbReference type="HPA" id="ENSG00000125975">
    <property type="expression patterns" value="Tissue enriched (testis)"/>
</dbReference>
<dbReference type="neXtProt" id="NX_Q96LM9"/>
<dbReference type="PharmGKB" id="PA25716"/>
<dbReference type="VEuPathDB" id="HostDB:ENSG00000125975"/>
<dbReference type="eggNOG" id="KOG2692">
    <property type="taxonomic scope" value="Eukaryota"/>
</dbReference>
<dbReference type="GeneTree" id="ENSGT00510000049503"/>
<dbReference type="HOGENOM" id="CLU_072229_0_0_1"/>
<dbReference type="InParanoid" id="Q96LM9"/>
<dbReference type="OMA" id="CPWFKFR"/>
<dbReference type="OrthoDB" id="9748577at2759"/>
<dbReference type="PAN-GO" id="Q96LM9">
    <property type="GO annotations" value="5 GO annotations based on evolutionary models"/>
</dbReference>
<dbReference type="PhylomeDB" id="Q96LM9"/>
<dbReference type="TreeFam" id="TF342353"/>
<dbReference type="PathwayCommons" id="Q96LM9"/>
<dbReference type="SignaLink" id="Q96LM9"/>
<dbReference type="BioGRID-ORCS" id="140873">
    <property type="hits" value="15 hits in 1129 CRISPR screens"/>
</dbReference>
<dbReference type="ChiTaRS" id="C20orf173">
    <property type="organism name" value="human"/>
</dbReference>
<dbReference type="GenomeRNAi" id="140873"/>
<dbReference type="Pharos" id="Q96LM9">
    <property type="development level" value="Tdark"/>
</dbReference>
<dbReference type="PRO" id="PR:Q96LM9"/>
<dbReference type="Proteomes" id="UP000005640">
    <property type="component" value="Chromosome 20"/>
</dbReference>
<dbReference type="RNAct" id="Q96LM9">
    <property type="molecule type" value="protein"/>
</dbReference>
<dbReference type="Bgee" id="ENSG00000125975">
    <property type="expression patterns" value="Expressed in male germ line stem cell (sensu Vertebrata) in testis and 22 other cell types or tissues"/>
</dbReference>
<dbReference type="ExpressionAtlas" id="Q96LM9">
    <property type="expression patterns" value="baseline and differential"/>
</dbReference>
<dbReference type="GO" id="GO:0016020">
    <property type="term" value="C:membrane"/>
    <property type="evidence" value="ECO:0000318"/>
    <property type="project" value="GO_Central"/>
</dbReference>
<dbReference type="GO" id="GO:0003836">
    <property type="term" value="F:beta-galactoside (CMP) alpha-2,3-sialyltransferase activity"/>
    <property type="evidence" value="ECO:0000318"/>
    <property type="project" value="GO_Central"/>
</dbReference>
<dbReference type="GO" id="GO:0010706">
    <property type="term" value="P:ganglioside biosynthetic process via lactosylceramide"/>
    <property type="evidence" value="ECO:0000318"/>
    <property type="project" value="GO_Central"/>
</dbReference>
<dbReference type="GO" id="GO:0006486">
    <property type="term" value="P:protein glycosylation"/>
    <property type="evidence" value="ECO:0000318"/>
    <property type="project" value="GO_Central"/>
</dbReference>
<dbReference type="GO" id="GO:0097503">
    <property type="term" value="P:sialylation"/>
    <property type="evidence" value="ECO:0000318"/>
    <property type="project" value="GO_Central"/>
</dbReference>
<dbReference type="Gene3D" id="3.90.1480.20">
    <property type="entry name" value="Glycosyl transferase family 29"/>
    <property type="match status" value="1"/>
</dbReference>
<dbReference type="InterPro" id="IPR051757">
    <property type="entry name" value="Beta-gal_alpha2-3_sialyltrans"/>
</dbReference>
<dbReference type="InterPro" id="IPR038578">
    <property type="entry name" value="GT29-like_sf"/>
</dbReference>
<dbReference type="PANTHER" id="PTHR46032">
    <property type="entry name" value="ALPHA-2,3-SIALYLTRANSFERASE ST3GAL I ISOFORM X1"/>
    <property type="match status" value="1"/>
</dbReference>
<dbReference type="PANTHER" id="PTHR46032:SF7">
    <property type="entry name" value="RIKEN CDNA 6430550D23 GENE"/>
    <property type="match status" value="1"/>
</dbReference>
<proteinExistence type="evidence at protein level"/>
<feature type="chain" id="PRO_0000079483" description="Uncharacterized protein C20orf173">
    <location>
        <begin position="1"/>
        <end position="149"/>
    </location>
</feature>
<feature type="splice variant" id="VSP_040891" description="In isoform 2." evidence="2">
    <original>MLSGPHPSPTFRPNPCPWPCLHSLWMEISPTQLCFLSPGPSPQSPSCCFQ</original>
    <variation>MKRWQIFVLWVFWVLILWLMTPYLDLTPESAPQEKRMYLVPQHCDCPWFSSGKCGCPSETLNCSSCHHTADEWNWLDACSRKTMGYLMRTRESMTSDTVLWWL</variation>
    <location>
        <begin position="1"/>
        <end position="50"/>
    </location>
</feature>
<feature type="sequence variant" id="VAR_024334" description="In dbSNP:rs7261862." evidence="1">
    <original>K</original>
    <variation>E</variation>
    <location>
        <position position="141"/>
    </location>
</feature>
<keyword id="KW-0025">Alternative splicing</keyword>
<keyword id="KW-1185">Reference proteome</keyword>
<comment type="interaction">
    <interactant intactId="EBI-12851858">
        <id>Q96LM9</id>
    </interactant>
    <interactant intactId="EBI-740220">
        <id>O14964</id>
        <label>HGS</label>
    </interactant>
    <organismsDiffer>false</organismsDiffer>
    <experiments>3</experiments>
</comment>
<comment type="alternative products">
    <event type="alternative splicing"/>
    <isoform>
        <id>Q96LM9-1</id>
        <name>1</name>
        <sequence type="displayed"/>
    </isoform>
    <isoform>
        <id>Q96LM9-2</id>
        <name>2</name>
        <sequence type="described" ref="VSP_040891"/>
    </isoform>
</comment>
<evidence type="ECO:0000269" key="1">
    <source>
    </source>
</evidence>
<evidence type="ECO:0000303" key="2">
    <source>
    </source>
</evidence>
<sequence length="149" mass="16552">MLSGPHPSPTFRPNPCPWPCLHSLWMEISPTQLCFLSPGPSPQSPSCCFQGMNSGSELGKLWRKLFKGIPRLSVSHFDFYCGTCVLLGRPQIPQGSSLGNDIDQYPVVFRNASDQGSWMQLEMLLRKLSDLVWTSDALSDKILEDGLVP</sequence>
<protein>
    <recommendedName>
        <fullName>Uncharacterized protein C20orf173</fullName>
    </recommendedName>
</protein>
<gene>
    <name type="primary">C20orf173</name>
</gene>
<accession>Q96LM9</accession>
<accession>A6PVJ1</accession>
<accession>Q2M293</accession>
<accession>Q5JWS4</accession>
<accession>Q9H449</accession>
<name>CT173_HUMAN</name>
<reference key="1">
    <citation type="journal article" date="2004" name="Nat. Genet.">
        <title>Complete sequencing and characterization of 21,243 full-length human cDNAs.</title>
        <authorList>
            <person name="Ota T."/>
            <person name="Suzuki Y."/>
            <person name="Nishikawa T."/>
            <person name="Otsuki T."/>
            <person name="Sugiyama T."/>
            <person name="Irie R."/>
            <person name="Wakamatsu A."/>
            <person name="Hayashi K."/>
            <person name="Sato H."/>
            <person name="Nagai K."/>
            <person name="Kimura K."/>
            <person name="Makita H."/>
            <person name="Sekine M."/>
            <person name="Obayashi M."/>
            <person name="Nishi T."/>
            <person name="Shibahara T."/>
            <person name="Tanaka T."/>
            <person name="Ishii S."/>
            <person name="Yamamoto J."/>
            <person name="Saito K."/>
            <person name="Kawai Y."/>
            <person name="Isono Y."/>
            <person name="Nakamura Y."/>
            <person name="Nagahari K."/>
            <person name="Murakami K."/>
            <person name="Yasuda T."/>
            <person name="Iwayanagi T."/>
            <person name="Wagatsuma M."/>
            <person name="Shiratori A."/>
            <person name="Sudo H."/>
            <person name="Hosoiri T."/>
            <person name="Kaku Y."/>
            <person name="Kodaira H."/>
            <person name="Kondo H."/>
            <person name="Sugawara M."/>
            <person name="Takahashi M."/>
            <person name="Kanda K."/>
            <person name="Yokoi T."/>
            <person name="Furuya T."/>
            <person name="Kikkawa E."/>
            <person name="Omura Y."/>
            <person name="Abe K."/>
            <person name="Kamihara K."/>
            <person name="Katsuta N."/>
            <person name="Sato K."/>
            <person name="Tanikawa M."/>
            <person name="Yamazaki M."/>
            <person name="Ninomiya K."/>
            <person name="Ishibashi T."/>
            <person name="Yamashita H."/>
            <person name="Murakawa K."/>
            <person name="Fujimori K."/>
            <person name="Tanai H."/>
            <person name="Kimata M."/>
            <person name="Watanabe M."/>
            <person name="Hiraoka S."/>
            <person name="Chiba Y."/>
            <person name="Ishida S."/>
            <person name="Ono Y."/>
            <person name="Takiguchi S."/>
            <person name="Watanabe S."/>
            <person name="Yosida M."/>
            <person name="Hotuta T."/>
            <person name="Kusano J."/>
            <person name="Kanehori K."/>
            <person name="Takahashi-Fujii A."/>
            <person name="Hara H."/>
            <person name="Tanase T.-O."/>
            <person name="Nomura Y."/>
            <person name="Togiya S."/>
            <person name="Komai F."/>
            <person name="Hara R."/>
            <person name="Takeuchi K."/>
            <person name="Arita M."/>
            <person name="Imose N."/>
            <person name="Musashino K."/>
            <person name="Yuuki H."/>
            <person name="Oshima A."/>
            <person name="Sasaki N."/>
            <person name="Aotsuka S."/>
            <person name="Yoshikawa Y."/>
            <person name="Matsunawa H."/>
            <person name="Ichihara T."/>
            <person name="Shiohata N."/>
            <person name="Sano S."/>
            <person name="Moriya S."/>
            <person name="Momiyama H."/>
            <person name="Satoh N."/>
            <person name="Takami S."/>
            <person name="Terashima Y."/>
            <person name="Suzuki O."/>
            <person name="Nakagawa S."/>
            <person name="Senoh A."/>
            <person name="Mizoguchi H."/>
            <person name="Goto Y."/>
            <person name="Shimizu F."/>
            <person name="Wakebe H."/>
            <person name="Hishigaki H."/>
            <person name="Watanabe T."/>
            <person name="Sugiyama A."/>
            <person name="Takemoto M."/>
            <person name="Kawakami B."/>
            <person name="Yamazaki M."/>
            <person name="Watanabe K."/>
            <person name="Kumagai A."/>
            <person name="Itakura S."/>
            <person name="Fukuzumi Y."/>
            <person name="Fujimori Y."/>
            <person name="Komiyama M."/>
            <person name="Tashiro H."/>
            <person name="Tanigami A."/>
            <person name="Fujiwara T."/>
            <person name="Ono T."/>
            <person name="Yamada K."/>
            <person name="Fujii Y."/>
            <person name="Ozaki K."/>
            <person name="Hirao M."/>
            <person name="Ohmori Y."/>
            <person name="Kawabata A."/>
            <person name="Hikiji T."/>
            <person name="Kobatake N."/>
            <person name="Inagaki H."/>
            <person name="Ikema Y."/>
            <person name="Okamoto S."/>
            <person name="Okitani R."/>
            <person name="Kawakami T."/>
            <person name="Noguchi S."/>
            <person name="Itoh T."/>
            <person name="Shigeta K."/>
            <person name="Senba T."/>
            <person name="Matsumura K."/>
            <person name="Nakajima Y."/>
            <person name="Mizuno T."/>
            <person name="Morinaga M."/>
            <person name="Sasaki M."/>
            <person name="Togashi T."/>
            <person name="Oyama M."/>
            <person name="Hata H."/>
            <person name="Watanabe M."/>
            <person name="Komatsu T."/>
            <person name="Mizushima-Sugano J."/>
            <person name="Satoh T."/>
            <person name="Shirai Y."/>
            <person name="Takahashi Y."/>
            <person name="Nakagawa K."/>
            <person name="Okumura K."/>
            <person name="Nagase T."/>
            <person name="Nomura N."/>
            <person name="Kikuchi H."/>
            <person name="Masuho Y."/>
            <person name="Yamashita R."/>
            <person name="Nakai K."/>
            <person name="Yada T."/>
            <person name="Nakamura Y."/>
            <person name="Ohara O."/>
            <person name="Isogai T."/>
            <person name="Sugano S."/>
        </authorList>
    </citation>
    <scope>NUCLEOTIDE SEQUENCE [LARGE SCALE MRNA] (ISOFORMS 1 AND 2)</scope>
    <scope>VARIANT GLU-141</scope>
    <source>
        <tissue>Testis</tissue>
    </source>
</reference>
<reference key="2">
    <citation type="journal article" date="2001" name="Nature">
        <title>The DNA sequence and comparative analysis of human chromosome 20.</title>
        <authorList>
            <person name="Deloukas P."/>
            <person name="Matthews L.H."/>
            <person name="Ashurst J.L."/>
            <person name="Burton J."/>
            <person name="Gilbert J.G.R."/>
            <person name="Jones M."/>
            <person name="Stavrides G."/>
            <person name="Almeida J.P."/>
            <person name="Babbage A.K."/>
            <person name="Bagguley C.L."/>
            <person name="Bailey J."/>
            <person name="Barlow K.F."/>
            <person name="Bates K.N."/>
            <person name="Beard L.M."/>
            <person name="Beare D.M."/>
            <person name="Beasley O.P."/>
            <person name="Bird C.P."/>
            <person name="Blakey S.E."/>
            <person name="Bridgeman A.M."/>
            <person name="Brown A.J."/>
            <person name="Buck D."/>
            <person name="Burrill W.D."/>
            <person name="Butler A.P."/>
            <person name="Carder C."/>
            <person name="Carter N.P."/>
            <person name="Chapman J.C."/>
            <person name="Clamp M."/>
            <person name="Clark G."/>
            <person name="Clark L.N."/>
            <person name="Clark S.Y."/>
            <person name="Clee C.M."/>
            <person name="Clegg S."/>
            <person name="Cobley V.E."/>
            <person name="Collier R.E."/>
            <person name="Connor R.E."/>
            <person name="Corby N.R."/>
            <person name="Coulson A."/>
            <person name="Coville G.J."/>
            <person name="Deadman R."/>
            <person name="Dhami P.D."/>
            <person name="Dunn M."/>
            <person name="Ellington A.G."/>
            <person name="Frankland J.A."/>
            <person name="Fraser A."/>
            <person name="French L."/>
            <person name="Garner P."/>
            <person name="Grafham D.V."/>
            <person name="Griffiths C."/>
            <person name="Griffiths M.N.D."/>
            <person name="Gwilliam R."/>
            <person name="Hall R.E."/>
            <person name="Hammond S."/>
            <person name="Harley J.L."/>
            <person name="Heath P.D."/>
            <person name="Ho S."/>
            <person name="Holden J.L."/>
            <person name="Howden P.J."/>
            <person name="Huckle E."/>
            <person name="Hunt A.R."/>
            <person name="Hunt S.E."/>
            <person name="Jekosch K."/>
            <person name="Johnson C.M."/>
            <person name="Johnson D."/>
            <person name="Kay M.P."/>
            <person name="Kimberley A.M."/>
            <person name="King A."/>
            <person name="Knights A."/>
            <person name="Laird G.K."/>
            <person name="Lawlor S."/>
            <person name="Lehvaeslaiho M.H."/>
            <person name="Leversha M.A."/>
            <person name="Lloyd C."/>
            <person name="Lloyd D.M."/>
            <person name="Lovell J.D."/>
            <person name="Marsh V.L."/>
            <person name="Martin S.L."/>
            <person name="McConnachie L.J."/>
            <person name="McLay K."/>
            <person name="McMurray A.A."/>
            <person name="Milne S.A."/>
            <person name="Mistry D."/>
            <person name="Moore M.J.F."/>
            <person name="Mullikin J.C."/>
            <person name="Nickerson T."/>
            <person name="Oliver K."/>
            <person name="Parker A."/>
            <person name="Patel R."/>
            <person name="Pearce T.A.V."/>
            <person name="Peck A.I."/>
            <person name="Phillimore B.J.C.T."/>
            <person name="Prathalingam S.R."/>
            <person name="Plumb R.W."/>
            <person name="Ramsay H."/>
            <person name="Rice C.M."/>
            <person name="Ross M.T."/>
            <person name="Scott C.E."/>
            <person name="Sehra H.K."/>
            <person name="Shownkeen R."/>
            <person name="Sims S."/>
            <person name="Skuce C.D."/>
            <person name="Smith M.L."/>
            <person name="Soderlund C."/>
            <person name="Steward C.A."/>
            <person name="Sulston J.E."/>
            <person name="Swann R.M."/>
            <person name="Sycamore N."/>
            <person name="Taylor R."/>
            <person name="Tee L."/>
            <person name="Thomas D.W."/>
            <person name="Thorpe A."/>
            <person name="Tracey A."/>
            <person name="Tromans A.C."/>
            <person name="Vaudin M."/>
            <person name="Wall M."/>
            <person name="Wallis J.M."/>
            <person name="Whitehead S.L."/>
            <person name="Whittaker P."/>
            <person name="Willey D.L."/>
            <person name="Williams L."/>
            <person name="Williams S.A."/>
            <person name="Wilming L."/>
            <person name="Wray P.W."/>
            <person name="Hubbard T."/>
            <person name="Durbin R.M."/>
            <person name="Bentley D.R."/>
            <person name="Beck S."/>
            <person name="Rogers J."/>
        </authorList>
    </citation>
    <scope>NUCLEOTIDE SEQUENCE [LARGE SCALE GENOMIC DNA]</scope>
</reference>
<reference key="3">
    <citation type="submission" date="2005-09" db="EMBL/GenBank/DDBJ databases">
        <authorList>
            <person name="Mural R.J."/>
            <person name="Istrail S."/>
            <person name="Sutton G.G."/>
            <person name="Florea L."/>
            <person name="Halpern A.L."/>
            <person name="Mobarry C.M."/>
            <person name="Lippert R."/>
            <person name="Walenz B."/>
            <person name="Shatkay H."/>
            <person name="Dew I."/>
            <person name="Miller J.R."/>
            <person name="Flanigan M.J."/>
            <person name="Edwards N.J."/>
            <person name="Bolanos R."/>
            <person name="Fasulo D."/>
            <person name="Halldorsson B.V."/>
            <person name="Hannenhalli S."/>
            <person name="Turner R."/>
            <person name="Yooseph S."/>
            <person name="Lu F."/>
            <person name="Nusskern D.R."/>
            <person name="Shue B.C."/>
            <person name="Zheng X.H."/>
            <person name="Zhong F."/>
            <person name="Delcher A.L."/>
            <person name="Huson D.H."/>
            <person name="Kravitz S.A."/>
            <person name="Mouchard L."/>
            <person name="Reinert K."/>
            <person name="Remington K.A."/>
            <person name="Clark A.G."/>
            <person name="Waterman M.S."/>
            <person name="Eichler E.E."/>
            <person name="Adams M.D."/>
            <person name="Hunkapiller M.W."/>
            <person name="Myers E.W."/>
            <person name="Venter J.C."/>
        </authorList>
    </citation>
    <scope>NUCLEOTIDE SEQUENCE [LARGE SCALE GENOMIC DNA]</scope>
</reference>
<reference key="4">
    <citation type="journal article" date="2004" name="Genome Res.">
        <title>The status, quality, and expansion of the NIH full-length cDNA project: the Mammalian Gene Collection (MGC).</title>
        <authorList>
            <consortium name="The MGC Project Team"/>
        </authorList>
    </citation>
    <scope>NUCLEOTIDE SEQUENCE [LARGE SCALE MRNA] (ISOFORM 1)</scope>
</reference>